<feature type="initiator methionine" description="Removed" evidence="1">
    <location>
        <position position="1"/>
    </location>
</feature>
<feature type="chain" id="PRO_0000191817" description="Cytoplasmic 60S subunit biogenesis factor ZNF622">
    <location>
        <begin position="2"/>
        <end position="386"/>
    </location>
</feature>
<feature type="zinc finger region" description="U1-type 1">
    <location>
        <begin position="4"/>
        <end position="28"/>
    </location>
</feature>
<feature type="zinc finger region" description="U1-type 2">
    <location>
        <begin position="67"/>
        <end position="91"/>
    </location>
</feature>
<feature type="region of interest" description="Disordered" evidence="2">
    <location>
        <begin position="135"/>
        <end position="237"/>
    </location>
</feature>
<feature type="compositionally biased region" description="Basic and acidic residues" evidence="2">
    <location>
        <begin position="165"/>
        <end position="176"/>
    </location>
</feature>
<feature type="compositionally biased region" description="Acidic residues" evidence="2">
    <location>
        <begin position="194"/>
        <end position="235"/>
    </location>
</feature>
<feature type="modified residue" description="N-acetylalanine" evidence="1">
    <location>
        <position position="2"/>
    </location>
</feature>
<feature type="modified residue" description="Phosphoserine" evidence="1">
    <location>
        <position position="269"/>
    </location>
</feature>
<evidence type="ECO:0000250" key="1">
    <source>
        <dbReference type="UniProtKB" id="Q969S3"/>
    </source>
</evidence>
<evidence type="ECO:0000256" key="2">
    <source>
        <dbReference type="SAM" id="MobiDB-lite"/>
    </source>
</evidence>
<evidence type="ECO:0000305" key="3"/>
<accession>Q7TM96</accession>
<keyword id="KW-0007">Acetylation</keyword>
<keyword id="KW-0963">Cytoplasm</keyword>
<keyword id="KW-0479">Metal-binding</keyword>
<keyword id="KW-0539">Nucleus</keyword>
<keyword id="KW-0597">Phosphoprotein</keyword>
<keyword id="KW-1185">Reference proteome</keyword>
<keyword id="KW-0677">Repeat</keyword>
<keyword id="KW-0690">Ribosome biogenesis</keyword>
<keyword id="KW-0832">Ubl conjugation</keyword>
<keyword id="KW-0862">Zinc</keyword>
<keyword id="KW-0863">Zinc-finger</keyword>
<protein>
    <recommendedName>
        <fullName evidence="3">Cytoplasmic 60S subunit biogenesis factor ZNF622</fullName>
    </recommendedName>
    <alternativeName>
        <fullName>Liver regeneration-related protein LRRG121</fullName>
    </alternativeName>
    <alternativeName>
        <fullName>Zinc finger protein 622</fullName>
    </alternativeName>
</protein>
<comment type="function">
    <text evidence="1">Pre-60S-associated cytoplasmic factor involved in the cytoplasmic maturation of the 60S subunit.</text>
</comment>
<comment type="subunit">
    <text evidence="1">Homo- and heterodimer. Associates with pre-60S ribosomal particles. Interacts with MELK and MYBL2. Interacts with DNAJC21.</text>
</comment>
<comment type="subcellular location">
    <subcellularLocation>
        <location evidence="1">Cytoplasm</location>
    </subcellularLocation>
    <subcellularLocation>
        <location evidence="1">Nucleus</location>
    </subcellularLocation>
</comment>
<comment type="PTM">
    <text evidence="1">Phosphorylated by MELK. The phosphorylation may redirect the protein to the nucleus.</text>
</comment>
<comment type="PTM">
    <text evidence="1">Ubiquitinated by HECTD1, leading to its degradation.</text>
</comment>
<comment type="similarity">
    <text evidence="3">Belongs to the REI1 family.</text>
</comment>
<comment type="sequence caution" evidence="3">
    <conflict type="erroneous initiation">
        <sequence resource="EMBL-CDS" id="AAP78750"/>
    </conflict>
</comment>
<comment type="sequence caution" evidence="3">
    <conflict type="erroneous initiation">
        <sequence resource="EMBL-CDS" id="AAP86261"/>
    </conflict>
</comment>
<proteinExistence type="evidence at protein level"/>
<organism>
    <name type="scientific">Rattus norvegicus</name>
    <name type="common">Rat</name>
    <dbReference type="NCBI Taxonomy" id="10116"/>
    <lineage>
        <taxon>Eukaryota</taxon>
        <taxon>Metazoa</taxon>
        <taxon>Chordata</taxon>
        <taxon>Craniata</taxon>
        <taxon>Vertebrata</taxon>
        <taxon>Euteleostomi</taxon>
        <taxon>Mammalia</taxon>
        <taxon>Eutheria</taxon>
        <taxon>Euarchontoglires</taxon>
        <taxon>Glires</taxon>
        <taxon>Rodentia</taxon>
        <taxon>Myomorpha</taxon>
        <taxon>Muroidea</taxon>
        <taxon>Muridae</taxon>
        <taxon>Murinae</taxon>
        <taxon>Rattus</taxon>
    </lineage>
</organism>
<sequence length="386" mass="43890">MATYTCITCRVAFRDAEMQRAHYKTDWHRYNLRRKVANMAPVTAEGFQERVRAQRAVAEEESKGTATYCTVCSKKFATFNAYENHLKSRRHVELEKKAVQAVSRQVEMMNEKNLEKGLGVDSVNKDAMNAAIQQAIKAQPSTSPKKAPFMPTDESRRVAGAVRRGTPERDPTEKPPRLQWFEQQAKKLAKQQWEESEEEGEEDDEDWEDIDSDDGLECENPGVEEEDAEDAEAEESPPLGAIPITDCLFCSHHSSSLVKNVAHMTKVHSFFIPDIEYLSDLKGLIKYLGEKVGVGKICLWCNEKGKSFYSTEAVQAHMNDKSHCKLFTDGDAALEFADFYDFRSSYPDYKEGQDPAEIEDLSSEKILECDDETMELILPSDLEYFD</sequence>
<reference key="1">
    <citation type="submission" date="2003-05" db="EMBL/GenBank/DDBJ databases">
        <title>Liver regeneration after PH.</title>
        <authorList>
            <person name="Xu C.S."/>
            <person name="Li W.Q."/>
            <person name="Li Y.C."/>
            <person name="Han H.P."/>
            <person name="Wang G.P."/>
            <person name="Chai L.Q."/>
            <person name="Yuan J.Y."/>
            <person name="Yang K.J."/>
            <person name="Yan H.M."/>
            <person name="Chang C.F."/>
            <person name="Zhao L.F."/>
            <person name="Ma H."/>
            <person name="Wang L."/>
            <person name="Wang S.F."/>
            <person name="Shi J.B."/>
            <person name="Rahman S."/>
            <person name="Wang Q.N."/>
            <person name="Zhang J.B."/>
        </authorList>
    </citation>
    <scope>NUCLEOTIDE SEQUENCE [LARGE SCALE MRNA]</scope>
    <source>
        <strain>Sprague-Dawley</strain>
        <tissue>Liver</tissue>
    </source>
</reference>
<reference key="2">
    <citation type="journal article" date="2012" name="Nat. Commun.">
        <title>Quantitative maps of protein phosphorylation sites across 14 different rat organs and tissues.</title>
        <authorList>
            <person name="Lundby A."/>
            <person name="Secher A."/>
            <person name="Lage K."/>
            <person name="Nordsborg N.B."/>
            <person name="Dmytriyev A."/>
            <person name="Lundby C."/>
            <person name="Olsen J.V."/>
        </authorList>
    </citation>
    <scope>IDENTIFICATION BY MASS SPECTROMETRY [LARGE SCALE ANALYSIS]</scope>
</reference>
<name>ZN622_RAT</name>
<dbReference type="EMBL" id="AY310142">
    <property type="protein sequence ID" value="AAP78750.1"/>
    <property type="status" value="ALT_INIT"/>
    <property type="molecule type" value="mRNA"/>
</dbReference>
<dbReference type="EMBL" id="AY321329">
    <property type="protein sequence ID" value="AAP86261.1"/>
    <property type="status" value="ALT_INIT"/>
    <property type="molecule type" value="mRNA"/>
</dbReference>
<dbReference type="SMR" id="Q7TM96"/>
<dbReference type="FunCoup" id="Q7TM96">
    <property type="interactions" value="2788"/>
</dbReference>
<dbReference type="STRING" id="10116.ENSRNOP00000073087"/>
<dbReference type="jPOST" id="Q7TM96"/>
<dbReference type="PaxDb" id="10116-ENSRNOP00000060898"/>
<dbReference type="UCSC" id="RGD:1309146">
    <property type="organism name" value="rat"/>
</dbReference>
<dbReference type="AGR" id="RGD:1309146"/>
<dbReference type="RGD" id="1309146">
    <property type="gene designation" value="Zfp622"/>
</dbReference>
<dbReference type="VEuPathDB" id="HostDB:ENSRNOG00000010589"/>
<dbReference type="eggNOG" id="KOG2785">
    <property type="taxonomic scope" value="Eukaryota"/>
</dbReference>
<dbReference type="InParanoid" id="Q7TM96"/>
<dbReference type="PRO" id="PR:Q7TM96"/>
<dbReference type="Proteomes" id="UP000002494">
    <property type="component" value="Chromosome 2"/>
</dbReference>
<dbReference type="Bgee" id="ENSRNOG00000059443">
    <property type="expression patterns" value="Expressed in skeletal muscle tissue and 13 other cell types or tissues"/>
</dbReference>
<dbReference type="GO" id="GO:0005737">
    <property type="term" value="C:cytoplasm"/>
    <property type="evidence" value="ECO:0007669"/>
    <property type="project" value="UniProtKB-SubCell"/>
</dbReference>
<dbReference type="GO" id="GO:0005634">
    <property type="term" value="C:nucleus"/>
    <property type="evidence" value="ECO:0007669"/>
    <property type="project" value="UniProtKB-SubCell"/>
</dbReference>
<dbReference type="GO" id="GO:0030687">
    <property type="term" value="C:preribosome, large subunit precursor"/>
    <property type="evidence" value="ECO:0000318"/>
    <property type="project" value="GO_Central"/>
</dbReference>
<dbReference type="GO" id="GO:0003676">
    <property type="term" value="F:nucleic acid binding"/>
    <property type="evidence" value="ECO:0007669"/>
    <property type="project" value="InterPro"/>
</dbReference>
<dbReference type="GO" id="GO:1990275">
    <property type="term" value="F:preribosome binding"/>
    <property type="evidence" value="ECO:0000250"/>
    <property type="project" value="UniProtKB"/>
</dbReference>
<dbReference type="GO" id="GO:0008270">
    <property type="term" value="F:zinc ion binding"/>
    <property type="evidence" value="ECO:0007669"/>
    <property type="project" value="UniProtKB-KW"/>
</dbReference>
<dbReference type="GO" id="GO:0008631">
    <property type="term" value="P:intrinsic apoptotic signaling pathway in response to oxidative stress"/>
    <property type="evidence" value="ECO:0000266"/>
    <property type="project" value="RGD"/>
</dbReference>
<dbReference type="GO" id="GO:0043065">
    <property type="term" value="P:positive regulation of apoptotic process"/>
    <property type="evidence" value="ECO:0000266"/>
    <property type="project" value="RGD"/>
</dbReference>
<dbReference type="GO" id="GO:0046330">
    <property type="term" value="P:positive regulation of JNK cascade"/>
    <property type="evidence" value="ECO:0000266"/>
    <property type="project" value="RGD"/>
</dbReference>
<dbReference type="GO" id="GO:0043410">
    <property type="term" value="P:positive regulation of MAPK cascade"/>
    <property type="evidence" value="ECO:0000266"/>
    <property type="project" value="RGD"/>
</dbReference>
<dbReference type="GO" id="GO:0042273">
    <property type="term" value="P:ribosomal large subunit biogenesis"/>
    <property type="evidence" value="ECO:0000250"/>
    <property type="project" value="UniProtKB"/>
</dbReference>
<dbReference type="FunFam" id="3.30.160.60:FF:000915">
    <property type="entry name" value="Zinc finger protein 622"/>
    <property type="match status" value="1"/>
</dbReference>
<dbReference type="Gene3D" id="3.30.160.60">
    <property type="entry name" value="Classic Zinc Finger"/>
    <property type="match status" value="1"/>
</dbReference>
<dbReference type="InterPro" id="IPR003604">
    <property type="entry name" value="Matrin/U1-like-C_Znf_C2H2"/>
</dbReference>
<dbReference type="InterPro" id="IPR041661">
    <property type="entry name" value="ZN622/Rei1/Reh1_Znf-C2H2"/>
</dbReference>
<dbReference type="InterPro" id="IPR040025">
    <property type="entry name" value="Znf622/Rei1/Reh1"/>
</dbReference>
<dbReference type="InterPro" id="IPR022755">
    <property type="entry name" value="Znf_C2H2_jaz"/>
</dbReference>
<dbReference type="InterPro" id="IPR036236">
    <property type="entry name" value="Znf_C2H2_sf"/>
</dbReference>
<dbReference type="InterPro" id="IPR013087">
    <property type="entry name" value="Znf_C2H2_type"/>
</dbReference>
<dbReference type="PANTHER" id="PTHR13182:SF8">
    <property type="entry name" value="CYTOPLASMIC 60S SUBUNIT BIOGENESIS FACTOR ZNF622"/>
    <property type="match status" value="1"/>
</dbReference>
<dbReference type="PANTHER" id="PTHR13182">
    <property type="entry name" value="ZINC FINGER PROTEIN 622"/>
    <property type="match status" value="1"/>
</dbReference>
<dbReference type="Pfam" id="PF12756">
    <property type="entry name" value="zf-C2H2_2"/>
    <property type="match status" value="1"/>
</dbReference>
<dbReference type="Pfam" id="PF12171">
    <property type="entry name" value="zf-C2H2_jaz"/>
    <property type="match status" value="1"/>
</dbReference>
<dbReference type="SMART" id="SM00355">
    <property type="entry name" value="ZnF_C2H2"/>
    <property type="match status" value="4"/>
</dbReference>
<dbReference type="SMART" id="SM00451">
    <property type="entry name" value="ZnF_U1"/>
    <property type="match status" value="2"/>
</dbReference>
<dbReference type="SUPFAM" id="SSF57667">
    <property type="entry name" value="beta-beta-alpha zinc fingers"/>
    <property type="match status" value="2"/>
</dbReference>
<gene>
    <name type="primary">Znf622</name>
    <name type="ORF">Ac1133</name>
    <name type="ORF">Ac2-061</name>
    <name type="ORF">Zfp622</name>
</gene>